<keyword id="KW-1185">Reference proteome</keyword>
<organism>
    <name type="scientific">Schizosaccharomyces pombe (strain 972 / ATCC 24843)</name>
    <name type="common">Fission yeast</name>
    <dbReference type="NCBI Taxonomy" id="284812"/>
    <lineage>
        <taxon>Eukaryota</taxon>
        <taxon>Fungi</taxon>
        <taxon>Dikarya</taxon>
        <taxon>Ascomycota</taxon>
        <taxon>Taphrinomycotina</taxon>
        <taxon>Schizosaccharomycetes</taxon>
        <taxon>Schizosaccharomycetales</taxon>
        <taxon>Schizosaccharomycetaceae</taxon>
        <taxon>Schizosaccharomyces</taxon>
    </lineage>
</organism>
<protein>
    <recommendedName>
        <fullName>Uncharacterized protein C6F6.19</fullName>
    </recommendedName>
</protein>
<dbReference type="EMBL" id="CU329670">
    <property type="protein sequence ID" value="CBA11500.1"/>
    <property type="molecule type" value="Genomic_DNA"/>
</dbReference>
<dbReference type="RefSeq" id="XP_002742509.1">
    <property type="nucleotide sequence ID" value="XM_002742463.1"/>
</dbReference>
<dbReference type="SMR" id="C6Y4A5"/>
<dbReference type="PaxDb" id="4896-SPAC6F6.19.1"/>
<dbReference type="EnsemblFungi" id="SPAC6F6.19.1">
    <property type="protein sequence ID" value="SPAC6F6.19.1:pep"/>
    <property type="gene ID" value="SPAC6F6.19"/>
</dbReference>
<dbReference type="PomBase" id="SPAC6F6.19"/>
<dbReference type="VEuPathDB" id="FungiDB:SPAC6F6.19"/>
<dbReference type="HOGENOM" id="CLU_2028088_0_0_1"/>
<dbReference type="InParanoid" id="C6Y4A5"/>
<dbReference type="PRO" id="PR:C6Y4A5"/>
<dbReference type="Proteomes" id="UP000002485">
    <property type="component" value="Chromosome I"/>
</dbReference>
<dbReference type="GO" id="GO:0005634">
    <property type="term" value="C:nucleus"/>
    <property type="evidence" value="ECO:0000250"/>
    <property type="project" value="PomBase"/>
</dbReference>
<dbReference type="GO" id="GO:0003723">
    <property type="term" value="F:RNA binding"/>
    <property type="evidence" value="ECO:0000250"/>
    <property type="project" value="PomBase"/>
</dbReference>
<dbReference type="InterPro" id="IPR025239">
    <property type="entry name" value="DUF4187"/>
</dbReference>
<dbReference type="InterPro" id="IPR039249">
    <property type="entry name" value="GPATCH11"/>
</dbReference>
<dbReference type="PANTHER" id="PTHR21032">
    <property type="entry name" value="G PATCH DOMAIN-CONTAINING PROTEIN 11"/>
    <property type="match status" value="1"/>
</dbReference>
<dbReference type="PANTHER" id="PTHR21032:SF0">
    <property type="entry name" value="G PATCH DOMAIN-CONTAINING PROTEIN 11"/>
    <property type="match status" value="1"/>
</dbReference>
<dbReference type="Pfam" id="PF13821">
    <property type="entry name" value="DUF4187"/>
    <property type="match status" value="1"/>
</dbReference>
<dbReference type="SMART" id="SM01173">
    <property type="entry name" value="DUF4187"/>
    <property type="match status" value="1"/>
</dbReference>
<reference key="1">
    <citation type="journal article" date="2002" name="Nature">
        <title>The genome sequence of Schizosaccharomyces pombe.</title>
        <authorList>
            <person name="Wood V."/>
            <person name="Gwilliam R."/>
            <person name="Rajandream M.A."/>
            <person name="Lyne M.H."/>
            <person name="Lyne R."/>
            <person name="Stewart A."/>
            <person name="Sgouros J.G."/>
            <person name="Peat N."/>
            <person name="Hayles J."/>
            <person name="Baker S.G."/>
            <person name="Basham D."/>
            <person name="Bowman S."/>
            <person name="Brooks K."/>
            <person name="Brown D."/>
            <person name="Brown S."/>
            <person name="Chillingworth T."/>
            <person name="Churcher C.M."/>
            <person name="Collins M."/>
            <person name="Connor R."/>
            <person name="Cronin A."/>
            <person name="Davis P."/>
            <person name="Feltwell T."/>
            <person name="Fraser A."/>
            <person name="Gentles S."/>
            <person name="Goble A."/>
            <person name="Hamlin N."/>
            <person name="Harris D.E."/>
            <person name="Hidalgo J."/>
            <person name="Hodgson G."/>
            <person name="Holroyd S."/>
            <person name="Hornsby T."/>
            <person name="Howarth S."/>
            <person name="Huckle E.J."/>
            <person name="Hunt S."/>
            <person name="Jagels K."/>
            <person name="James K.D."/>
            <person name="Jones L."/>
            <person name="Jones M."/>
            <person name="Leather S."/>
            <person name="McDonald S."/>
            <person name="McLean J."/>
            <person name="Mooney P."/>
            <person name="Moule S."/>
            <person name="Mungall K.L."/>
            <person name="Murphy L.D."/>
            <person name="Niblett D."/>
            <person name="Odell C."/>
            <person name="Oliver K."/>
            <person name="O'Neil S."/>
            <person name="Pearson D."/>
            <person name="Quail M.A."/>
            <person name="Rabbinowitsch E."/>
            <person name="Rutherford K.M."/>
            <person name="Rutter S."/>
            <person name="Saunders D."/>
            <person name="Seeger K."/>
            <person name="Sharp S."/>
            <person name="Skelton J."/>
            <person name="Simmonds M.N."/>
            <person name="Squares R."/>
            <person name="Squares S."/>
            <person name="Stevens K."/>
            <person name="Taylor K."/>
            <person name="Taylor R.G."/>
            <person name="Tivey A."/>
            <person name="Walsh S.V."/>
            <person name="Warren T."/>
            <person name="Whitehead S."/>
            <person name="Woodward J.R."/>
            <person name="Volckaert G."/>
            <person name="Aert R."/>
            <person name="Robben J."/>
            <person name="Grymonprez B."/>
            <person name="Weltjens I."/>
            <person name="Vanstreels E."/>
            <person name="Rieger M."/>
            <person name="Schaefer M."/>
            <person name="Mueller-Auer S."/>
            <person name="Gabel C."/>
            <person name="Fuchs M."/>
            <person name="Duesterhoeft A."/>
            <person name="Fritzc C."/>
            <person name="Holzer E."/>
            <person name="Moestl D."/>
            <person name="Hilbert H."/>
            <person name="Borzym K."/>
            <person name="Langer I."/>
            <person name="Beck A."/>
            <person name="Lehrach H."/>
            <person name="Reinhardt R."/>
            <person name="Pohl T.M."/>
            <person name="Eger P."/>
            <person name="Zimmermann W."/>
            <person name="Wedler H."/>
            <person name="Wambutt R."/>
            <person name="Purnelle B."/>
            <person name="Goffeau A."/>
            <person name="Cadieu E."/>
            <person name="Dreano S."/>
            <person name="Gloux S."/>
            <person name="Lelaure V."/>
            <person name="Mottier S."/>
            <person name="Galibert F."/>
            <person name="Aves S.J."/>
            <person name="Xiang Z."/>
            <person name="Hunt C."/>
            <person name="Moore K."/>
            <person name="Hurst S.M."/>
            <person name="Lucas M."/>
            <person name="Rochet M."/>
            <person name="Gaillardin C."/>
            <person name="Tallada V.A."/>
            <person name="Garzon A."/>
            <person name="Thode G."/>
            <person name="Daga R.R."/>
            <person name="Cruzado L."/>
            <person name="Jimenez J."/>
            <person name="Sanchez M."/>
            <person name="del Rey F."/>
            <person name="Benito J."/>
            <person name="Dominguez A."/>
            <person name="Revuelta J.L."/>
            <person name="Moreno S."/>
            <person name="Armstrong J."/>
            <person name="Forsburg S.L."/>
            <person name="Cerutti L."/>
            <person name="Lowe T."/>
            <person name="McCombie W.R."/>
            <person name="Paulsen I."/>
            <person name="Potashkin J."/>
            <person name="Shpakovski G.V."/>
            <person name="Ussery D."/>
            <person name="Barrell B.G."/>
            <person name="Nurse P."/>
        </authorList>
    </citation>
    <scope>NUCLEOTIDE SEQUENCE [LARGE SCALE GENOMIC DNA]</scope>
    <source>
        <strain>972 / ATCC 24843</strain>
    </source>
</reference>
<reference key="2">
    <citation type="journal article" date="2008" name="Nature">
        <title>Dynamic repertoire of a eukaryotic transcriptome surveyed at single-nucleotide resolution.</title>
        <authorList>
            <person name="Wilhelm B.T."/>
            <person name="Marguerat S."/>
            <person name="Watt S."/>
            <person name="Schubert F."/>
            <person name="Wood V."/>
            <person name="Goodhead I."/>
            <person name="Penkett C.J."/>
            <person name="Rogers J."/>
            <person name="Baehler J."/>
        </authorList>
    </citation>
    <scope>IDENTIFICATION</scope>
</reference>
<gene>
    <name type="ORF">SPAC6F6.19</name>
</gene>
<name>YELS_SCHPO</name>
<accession>C6Y4A5</accession>
<proteinExistence type="evidence at transcript level"/>
<feature type="chain" id="PRO_0000389128" description="Uncharacterized protein C6F6.19">
    <location>
        <begin position="1"/>
        <end position="122"/>
    </location>
</feature>
<sequence>MELEKKGIELTLQRAHPFYKGIMLEEKLADLEKMKQKKLFSRISLSNAKASQEIDLESAIKEEANSDALYVEFESLEESKQLDVVLHLLRDRFLYCLYCGCHYDSQEDLIENCPGINEEDHE</sequence>